<accession>Q5M5M9</accession>
<evidence type="ECO:0000255" key="1">
    <source>
        <dbReference type="HAMAP-Rule" id="MF_00040"/>
    </source>
</evidence>
<keyword id="KW-0963">Cytoplasm</keyword>
<keyword id="KW-0648">Protein biosynthesis</keyword>
<keyword id="KW-1185">Reference proteome</keyword>
<comment type="function">
    <text evidence="1">Responsible for the release of ribosomes from messenger RNA at the termination of protein biosynthesis. May increase the efficiency of translation by recycling ribosomes from one round of translation to another.</text>
</comment>
<comment type="subcellular location">
    <subcellularLocation>
        <location evidence="1">Cytoplasm</location>
    </subcellularLocation>
</comment>
<comment type="similarity">
    <text evidence="1">Belongs to the RRF family.</text>
</comment>
<protein>
    <recommendedName>
        <fullName evidence="1">Ribosome-recycling factor</fullName>
        <shortName evidence="1">RRF</shortName>
    </recommendedName>
    <alternativeName>
        <fullName evidence="1">Ribosome-releasing factor</fullName>
    </alternativeName>
</protein>
<proteinExistence type="inferred from homology"/>
<name>RRF_STRT2</name>
<reference key="1">
    <citation type="journal article" date="2004" name="Nat. Biotechnol.">
        <title>Complete sequence and comparative genome analysis of the dairy bacterium Streptococcus thermophilus.</title>
        <authorList>
            <person name="Bolotin A."/>
            <person name="Quinquis B."/>
            <person name="Renault P."/>
            <person name="Sorokin A."/>
            <person name="Ehrlich S.D."/>
            <person name="Kulakauskas S."/>
            <person name="Lapidus A."/>
            <person name="Goltsman E."/>
            <person name="Mazur M."/>
            <person name="Pusch G.D."/>
            <person name="Fonstein M."/>
            <person name="Overbeek R."/>
            <person name="Kyprides N."/>
            <person name="Purnelle B."/>
            <person name="Prozzi D."/>
            <person name="Ngui K."/>
            <person name="Masuy D."/>
            <person name="Hancy F."/>
            <person name="Burteau S."/>
            <person name="Boutry M."/>
            <person name="Delcour J."/>
            <person name="Goffeau A."/>
            <person name="Hols P."/>
        </authorList>
    </citation>
    <scope>NUCLEOTIDE SEQUENCE [LARGE SCALE GENOMIC DNA]</scope>
    <source>
        <strain>ATCC BAA-250 / LMG 18311</strain>
    </source>
</reference>
<gene>
    <name evidence="1" type="primary">frr</name>
    <name type="ordered locus">stu0439</name>
</gene>
<dbReference type="EMBL" id="CP000023">
    <property type="protein sequence ID" value="AAV60152.1"/>
    <property type="molecule type" value="Genomic_DNA"/>
</dbReference>
<dbReference type="RefSeq" id="WP_011225565.1">
    <property type="nucleotide sequence ID" value="NC_006448.1"/>
</dbReference>
<dbReference type="SMR" id="Q5M5M9"/>
<dbReference type="STRING" id="264199.stu0439"/>
<dbReference type="GeneID" id="66898353"/>
<dbReference type="KEGG" id="stl:stu0439"/>
<dbReference type="PATRIC" id="fig|264199.4.peg.441"/>
<dbReference type="eggNOG" id="COG0233">
    <property type="taxonomic scope" value="Bacteria"/>
</dbReference>
<dbReference type="HOGENOM" id="CLU_073981_2_0_9"/>
<dbReference type="Proteomes" id="UP000001170">
    <property type="component" value="Chromosome"/>
</dbReference>
<dbReference type="GO" id="GO:0005737">
    <property type="term" value="C:cytoplasm"/>
    <property type="evidence" value="ECO:0007669"/>
    <property type="project" value="UniProtKB-SubCell"/>
</dbReference>
<dbReference type="GO" id="GO:0043023">
    <property type="term" value="F:ribosomal large subunit binding"/>
    <property type="evidence" value="ECO:0007669"/>
    <property type="project" value="TreeGrafter"/>
</dbReference>
<dbReference type="GO" id="GO:0006415">
    <property type="term" value="P:translational termination"/>
    <property type="evidence" value="ECO:0007669"/>
    <property type="project" value="UniProtKB-UniRule"/>
</dbReference>
<dbReference type="CDD" id="cd00520">
    <property type="entry name" value="RRF"/>
    <property type="match status" value="1"/>
</dbReference>
<dbReference type="FunFam" id="1.10.132.20:FF:000001">
    <property type="entry name" value="Ribosome-recycling factor"/>
    <property type="match status" value="1"/>
</dbReference>
<dbReference type="FunFam" id="3.30.1360.40:FF:000001">
    <property type="entry name" value="Ribosome-recycling factor"/>
    <property type="match status" value="1"/>
</dbReference>
<dbReference type="Gene3D" id="3.30.1360.40">
    <property type="match status" value="1"/>
</dbReference>
<dbReference type="Gene3D" id="1.10.132.20">
    <property type="entry name" value="Ribosome-recycling factor"/>
    <property type="match status" value="1"/>
</dbReference>
<dbReference type="HAMAP" id="MF_00040">
    <property type="entry name" value="RRF"/>
    <property type="match status" value="1"/>
</dbReference>
<dbReference type="InterPro" id="IPR002661">
    <property type="entry name" value="Ribosome_recyc_fac"/>
</dbReference>
<dbReference type="InterPro" id="IPR023584">
    <property type="entry name" value="Ribosome_recyc_fac_dom"/>
</dbReference>
<dbReference type="InterPro" id="IPR036191">
    <property type="entry name" value="RRF_sf"/>
</dbReference>
<dbReference type="NCBIfam" id="TIGR00496">
    <property type="entry name" value="frr"/>
    <property type="match status" value="1"/>
</dbReference>
<dbReference type="PANTHER" id="PTHR20982:SF3">
    <property type="entry name" value="MITOCHONDRIAL RIBOSOME RECYCLING FACTOR PSEUDO 1"/>
    <property type="match status" value="1"/>
</dbReference>
<dbReference type="PANTHER" id="PTHR20982">
    <property type="entry name" value="RIBOSOME RECYCLING FACTOR"/>
    <property type="match status" value="1"/>
</dbReference>
<dbReference type="Pfam" id="PF01765">
    <property type="entry name" value="RRF"/>
    <property type="match status" value="1"/>
</dbReference>
<dbReference type="SUPFAM" id="SSF55194">
    <property type="entry name" value="Ribosome recycling factor, RRF"/>
    <property type="match status" value="1"/>
</dbReference>
<sequence>MTNTIIEKAKERFAHTHESLAREFGAIRAGRANASLLDRITVEYYGAPTPLNQLASITVPEARVLLISPFDKGSIADIERAINESDLGINPANDGSVIRLVIPALTEETRKELAKEVKKVGENAKIAIRNIRRDAMDEAKKQEKEKEITEDQLKTLEKDIQKATDDAVNKIDSMIAEKEKELLTV</sequence>
<feature type="chain" id="PRO_0000167559" description="Ribosome-recycling factor">
    <location>
        <begin position="1"/>
        <end position="185"/>
    </location>
</feature>
<organism>
    <name type="scientific">Streptococcus thermophilus (strain ATCC BAA-250 / LMG 18311)</name>
    <dbReference type="NCBI Taxonomy" id="264199"/>
    <lineage>
        <taxon>Bacteria</taxon>
        <taxon>Bacillati</taxon>
        <taxon>Bacillota</taxon>
        <taxon>Bacilli</taxon>
        <taxon>Lactobacillales</taxon>
        <taxon>Streptococcaceae</taxon>
        <taxon>Streptococcus</taxon>
    </lineage>
</organism>